<protein>
    <recommendedName>
        <fullName>Protein OPG096</fullName>
    </recommendedName>
    <alternativeName>
        <fullName>Protein L2</fullName>
    </alternativeName>
</protein>
<accession>P20843</accession>
<name>PG096_VACCC</name>
<evidence type="ECO:0000250" key="1">
    <source>
        <dbReference type="UniProtKB" id="P07613"/>
    </source>
</evidence>
<evidence type="ECO:0000255" key="2"/>
<evidence type="ECO:0000305" key="3"/>
<dbReference type="EMBL" id="M35027">
    <property type="protein sequence ID" value="AAA48077.1"/>
    <property type="molecule type" value="Genomic_DNA"/>
</dbReference>
<dbReference type="PIR" id="I42512">
    <property type="entry name" value="I42512"/>
</dbReference>
<dbReference type="Proteomes" id="UP000008269">
    <property type="component" value="Segment"/>
</dbReference>
<dbReference type="GO" id="GO:0044167">
    <property type="term" value="C:host cell endoplasmic reticulum membrane"/>
    <property type="evidence" value="ECO:0007669"/>
    <property type="project" value="UniProtKB-SubCell"/>
</dbReference>
<dbReference type="GO" id="GO:0016020">
    <property type="term" value="C:membrane"/>
    <property type="evidence" value="ECO:0007669"/>
    <property type="project" value="UniProtKB-KW"/>
</dbReference>
<dbReference type="GO" id="GO:0055036">
    <property type="term" value="C:virion membrane"/>
    <property type="evidence" value="ECO:0007669"/>
    <property type="project" value="UniProtKB-SubCell"/>
</dbReference>
<dbReference type="InterPro" id="IPR008447">
    <property type="entry name" value="Prot_L2"/>
</dbReference>
<dbReference type="Pfam" id="PF05803">
    <property type="entry name" value="Chordopox_L2"/>
    <property type="match status" value="1"/>
</dbReference>
<organism>
    <name type="scientific">Vaccinia virus (strain Copenhagen)</name>
    <name type="common">VACV</name>
    <dbReference type="NCBI Taxonomy" id="10249"/>
    <lineage>
        <taxon>Viruses</taxon>
        <taxon>Varidnaviria</taxon>
        <taxon>Bamfordvirae</taxon>
        <taxon>Nucleocytoviricota</taxon>
        <taxon>Pokkesviricetes</taxon>
        <taxon>Chitovirales</taxon>
        <taxon>Poxviridae</taxon>
        <taxon>Chordopoxvirinae</taxon>
        <taxon>Orthopoxvirus</taxon>
        <taxon>Vaccinia virus</taxon>
    </lineage>
</organism>
<keyword id="KW-0244">Early protein</keyword>
<keyword id="KW-1035">Host cytoplasm</keyword>
<keyword id="KW-1038">Host endoplasmic reticulum</keyword>
<keyword id="KW-1043">Host membrane</keyword>
<keyword id="KW-0472">Membrane</keyword>
<keyword id="KW-1185">Reference proteome</keyword>
<keyword id="KW-0812">Transmembrane</keyword>
<keyword id="KW-1133">Transmembrane helix</keyword>
<keyword id="KW-0946">Virion</keyword>
<comment type="function">
    <text evidence="1">Early protein involved in virion morphogenesis. Participates in the formation and elongation of crescent-shaped membrane precursors of immature virions in cytoplasmic factories.</text>
</comment>
<comment type="subunit">
    <text evidence="1">Interacts with OPG158.</text>
</comment>
<comment type="subcellular location">
    <subcellularLocation>
        <location evidence="1">Virion membrane</location>
        <topology evidence="1">Multi-pass membrane protein</topology>
    </subcellularLocation>
    <subcellularLocation>
        <location evidence="1">Host cytoplasm</location>
    </subcellularLocation>
    <subcellularLocation>
        <location evidence="1">Host endoplasmic reticulum membrane</location>
    </subcellularLocation>
    <text evidence="1">Localizes in cytoplasmic virus factories.</text>
</comment>
<comment type="induction">
    <text>Expressed in the early phase of the viral replicative cycle.</text>
</comment>
<comment type="similarity">
    <text evidence="3">Belongs to the orthopoxvirus OPG096 family.</text>
</comment>
<feature type="chain" id="PRO_0000099617" description="Protein OPG096">
    <location>
        <begin position="1"/>
        <end position="87"/>
    </location>
</feature>
<feature type="transmembrane region" description="Helical" evidence="2">
    <location>
        <begin position="39"/>
        <end position="59"/>
    </location>
</feature>
<feature type="transmembrane region" description="Helical" evidence="2">
    <location>
        <begin position="67"/>
        <end position="87"/>
    </location>
</feature>
<organismHost>
    <name type="scientific">Homo sapiens</name>
    <name type="common">Human</name>
    <dbReference type="NCBI Taxonomy" id="9606"/>
</organismHost>
<reference key="1">
    <citation type="journal article" date="1990" name="Virology">
        <title>The complete DNA sequence of vaccinia virus.</title>
        <authorList>
            <person name="Goebel S.J."/>
            <person name="Johnson G.P."/>
            <person name="Perkus M.E."/>
            <person name="Davis S.W."/>
            <person name="Winslow J.P."/>
            <person name="Paoletti E."/>
        </authorList>
    </citation>
    <scope>NUCLEOTIDE SEQUENCE [LARGE SCALE GENOMIC DNA]</scope>
</reference>
<reference key="2">
    <citation type="journal article" date="1990" name="Virology">
        <title>Appendix to 'The complete DNA sequence of vaccinia virus'.</title>
        <authorList>
            <person name="Goebel S.J."/>
            <person name="Johnson G.P."/>
            <person name="Perkus M.E."/>
            <person name="Davis S.W."/>
            <person name="Winslow J.P."/>
            <person name="Paoletti E."/>
        </authorList>
    </citation>
    <scope>NUCLEOTIDE SEQUENCE [LARGE SCALE GENOMIC DNA]</scope>
</reference>
<proteinExistence type="evidence at transcript level"/>
<gene>
    <name type="primary">OPG096</name>
    <name type="ORF">L2R</name>
</gene>
<sequence>MEVIADRLDDIVKQNIADEKFVDFVIHGLEHQCPAILRPLIRLFIDILLFVIVIYIFTVRLVSRNYQMLLALVALVITLTIFYYFIL</sequence>